<proteinExistence type="evidence at transcript level"/>
<dbReference type="EC" id="3.1.-.-" evidence="1"/>
<dbReference type="EMBL" id="BC087090">
    <property type="protein sequence ID" value="AAH87090.1"/>
    <property type="molecule type" value="mRNA"/>
</dbReference>
<dbReference type="RefSeq" id="NP_001009292.1">
    <property type="nucleotide sequence ID" value="NM_001009292.1"/>
</dbReference>
<dbReference type="SMR" id="Q5PQP5"/>
<dbReference type="FunCoup" id="Q5PQP5">
    <property type="interactions" value="120"/>
</dbReference>
<dbReference type="STRING" id="10116.ENSRNOP00000026231"/>
<dbReference type="PhosphoSitePlus" id="Q5PQP5"/>
<dbReference type="PaxDb" id="10116-ENSRNOP00000026231"/>
<dbReference type="Ensembl" id="ENSRNOT00000026231.5">
    <property type="protein sequence ID" value="ENSRNOP00000026231.4"/>
    <property type="gene ID" value="ENSRNOG00000019369.7"/>
</dbReference>
<dbReference type="GeneID" id="293489"/>
<dbReference type="KEGG" id="rno:293489"/>
<dbReference type="UCSC" id="RGD:1311568">
    <property type="organism name" value="rat"/>
</dbReference>
<dbReference type="AGR" id="RGD:1311568"/>
<dbReference type="CTD" id="79008"/>
<dbReference type="RGD" id="1311568">
    <property type="gene designation" value="Slx1b"/>
</dbReference>
<dbReference type="eggNOG" id="KOG3005">
    <property type="taxonomic scope" value="Eukaryota"/>
</dbReference>
<dbReference type="GeneTree" id="ENSGT00390000013368"/>
<dbReference type="HOGENOM" id="CLU_030739_0_0_1"/>
<dbReference type="InParanoid" id="Q5PQP5"/>
<dbReference type="OMA" id="HNRGCDF"/>
<dbReference type="OrthoDB" id="51590at9989"/>
<dbReference type="PhylomeDB" id="Q5PQP5"/>
<dbReference type="TreeFam" id="TF352344"/>
<dbReference type="Reactome" id="R-RNO-5693568">
    <property type="pathway name" value="Resolution of D-loop Structures through Holliday Junction Intermediates"/>
</dbReference>
<dbReference type="Reactome" id="R-RNO-6783310">
    <property type="pathway name" value="Fanconi Anemia Pathway"/>
</dbReference>
<dbReference type="PRO" id="PR:Q5PQP5"/>
<dbReference type="Proteomes" id="UP000002494">
    <property type="component" value="Chromosome 1"/>
</dbReference>
<dbReference type="Bgee" id="ENSRNOG00000019369">
    <property type="expression patterns" value="Expressed in pancreas and 19 other cell types or tissues"/>
</dbReference>
<dbReference type="ExpressionAtlas" id="Q5PQP5">
    <property type="expression patterns" value="baseline and differential"/>
</dbReference>
<dbReference type="GO" id="GO:0033557">
    <property type="term" value="C:Slx1-Slx4 complex"/>
    <property type="evidence" value="ECO:0000266"/>
    <property type="project" value="RGD"/>
</dbReference>
<dbReference type="GO" id="GO:0017108">
    <property type="term" value="F:5'-flap endonuclease activity"/>
    <property type="evidence" value="ECO:0000266"/>
    <property type="project" value="RGD"/>
</dbReference>
<dbReference type="GO" id="GO:0008821">
    <property type="term" value="F:crossover junction DNA endonuclease activity"/>
    <property type="evidence" value="ECO:0000266"/>
    <property type="project" value="RGD"/>
</dbReference>
<dbReference type="GO" id="GO:0008270">
    <property type="term" value="F:zinc ion binding"/>
    <property type="evidence" value="ECO:0007669"/>
    <property type="project" value="UniProtKB-KW"/>
</dbReference>
<dbReference type="GO" id="GO:0010792">
    <property type="term" value="P:DNA double-strand break processing involved in repair via single-strand annealing"/>
    <property type="evidence" value="ECO:0000266"/>
    <property type="project" value="RGD"/>
</dbReference>
<dbReference type="GO" id="GO:0006281">
    <property type="term" value="P:DNA repair"/>
    <property type="evidence" value="ECO:0000266"/>
    <property type="project" value="RGD"/>
</dbReference>
<dbReference type="GO" id="GO:0000724">
    <property type="term" value="P:double-strand break repair via homologous recombination"/>
    <property type="evidence" value="ECO:0000266"/>
    <property type="project" value="RGD"/>
</dbReference>
<dbReference type="GO" id="GO:1904357">
    <property type="term" value="P:negative regulation of telomere maintenance via telomere lengthening"/>
    <property type="evidence" value="ECO:0000266"/>
    <property type="project" value="RGD"/>
</dbReference>
<dbReference type="GO" id="GO:1904431">
    <property type="term" value="P:positive regulation of t-circle formation"/>
    <property type="evidence" value="ECO:0000266"/>
    <property type="project" value="RGD"/>
</dbReference>
<dbReference type="GO" id="GO:0090656">
    <property type="term" value="P:t-circle formation"/>
    <property type="evidence" value="ECO:0000266"/>
    <property type="project" value="RGD"/>
</dbReference>
<dbReference type="GO" id="GO:0010833">
    <property type="term" value="P:telomere maintenance via telomere lengthening"/>
    <property type="evidence" value="ECO:0000266"/>
    <property type="project" value="RGD"/>
</dbReference>
<dbReference type="GO" id="GO:0061820">
    <property type="term" value="P:telomeric D-loop disassembly"/>
    <property type="evidence" value="ECO:0000266"/>
    <property type="project" value="RGD"/>
</dbReference>
<dbReference type="CDD" id="cd10455">
    <property type="entry name" value="GIY-YIG_SLX1"/>
    <property type="match status" value="1"/>
</dbReference>
<dbReference type="FunFam" id="3.30.40.10:FF:000392">
    <property type="entry name" value="Structure-specific endonuclease subunit SLX1"/>
    <property type="match status" value="1"/>
</dbReference>
<dbReference type="FunFam" id="3.40.1440.10:FF:000003">
    <property type="entry name" value="Structure-specific endonuclease subunit SLX1"/>
    <property type="match status" value="1"/>
</dbReference>
<dbReference type="Gene3D" id="3.40.1440.10">
    <property type="entry name" value="GIY-YIG endonuclease"/>
    <property type="match status" value="1"/>
</dbReference>
<dbReference type="Gene3D" id="3.30.40.10">
    <property type="entry name" value="Zinc/RING finger domain, C3HC4 (zinc finger)"/>
    <property type="match status" value="1"/>
</dbReference>
<dbReference type="HAMAP" id="MF_03100">
    <property type="entry name" value="Endonuc_su_Slx1"/>
    <property type="match status" value="1"/>
</dbReference>
<dbReference type="InterPro" id="IPR000305">
    <property type="entry name" value="GIY-YIG_endonuc"/>
</dbReference>
<dbReference type="InterPro" id="IPR035901">
    <property type="entry name" value="GIY-YIG_endonuc_sf"/>
</dbReference>
<dbReference type="InterPro" id="IPR027520">
    <property type="entry name" value="Slx1"/>
</dbReference>
<dbReference type="InterPro" id="IPR048749">
    <property type="entry name" value="SLX1_C"/>
</dbReference>
<dbReference type="InterPro" id="IPR050381">
    <property type="entry name" value="SLX1_endonuclease"/>
</dbReference>
<dbReference type="InterPro" id="IPR013083">
    <property type="entry name" value="Znf_RING/FYVE/PHD"/>
</dbReference>
<dbReference type="PANTHER" id="PTHR20208">
    <property type="entry name" value="STRUCTURE-SPECIFIC ENDONUCLEASE SUBUNIT SLX1"/>
    <property type="match status" value="1"/>
</dbReference>
<dbReference type="PANTHER" id="PTHR20208:SF10">
    <property type="entry name" value="STRUCTURE-SPECIFIC ENDONUCLEASE SUBUNIT SLX1"/>
    <property type="match status" value="1"/>
</dbReference>
<dbReference type="Pfam" id="PF01541">
    <property type="entry name" value="GIY-YIG"/>
    <property type="match status" value="1"/>
</dbReference>
<dbReference type="Pfam" id="PF21202">
    <property type="entry name" value="SLX1_C"/>
    <property type="match status" value="1"/>
</dbReference>
<dbReference type="SMART" id="SM00465">
    <property type="entry name" value="GIYc"/>
    <property type="match status" value="1"/>
</dbReference>
<dbReference type="SUPFAM" id="SSF82771">
    <property type="entry name" value="GIY-YIG endonuclease"/>
    <property type="match status" value="1"/>
</dbReference>
<dbReference type="PROSITE" id="PS50164">
    <property type="entry name" value="GIY_YIG"/>
    <property type="match status" value="1"/>
</dbReference>
<accession>Q5PQP5</accession>
<comment type="function">
    <text evidence="1">Catalytic subunit of the SLX1-SLX4 structure-specific endonuclease that resolves DNA secondary structures generated during DNA repair and recombination. Has endonuclease activity towards branched DNA substrates, introducing single-strand cuts in duplex DNA close to junctions with ss-DNA. Has a preference for 5'-flap structures, and promotes symmetrical cleavage of static and migrating Holliday junctions (HJs). Resolves HJs by generating two pairs of ligatable, nicked duplex products.</text>
</comment>
<comment type="cofactor">
    <cofactor evidence="1">
        <name>a divalent metal cation</name>
        <dbReference type="ChEBI" id="CHEBI:60240"/>
    </cofactor>
</comment>
<comment type="subunit">
    <text evidence="1">Forms a heterodimer with SLX4.</text>
</comment>
<comment type="subcellular location">
    <subcellularLocation>
        <location evidence="1">Nucleus</location>
    </subcellularLocation>
</comment>
<comment type="similarity">
    <text evidence="1">Belongs to the SLX1 family.</text>
</comment>
<gene>
    <name type="primary">Slx1b</name>
    <name type="synonym">Giyd1</name>
    <name type="synonym">Giyd2</name>
    <name type="synonym">Slx1</name>
</gene>
<protein>
    <recommendedName>
        <fullName evidence="1">Structure-specific endonuclease subunit SLX1</fullName>
        <ecNumber evidence="1">3.1.-.-</ecNumber>
    </recommendedName>
    <alternativeName>
        <fullName evidence="1">GIY-YIG domain-containing protein 1</fullName>
    </alternativeName>
</protein>
<evidence type="ECO:0000255" key="1">
    <source>
        <dbReference type="HAMAP-Rule" id="MF_03100"/>
    </source>
</evidence>
<organism>
    <name type="scientific">Rattus norvegicus</name>
    <name type="common">Rat</name>
    <dbReference type="NCBI Taxonomy" id="10116"/>
    <lineage>
        <taxon>Eukaryota</taxon>
        <taxon>Metazoa</taxon>
        <taxon>Chordata</taxon>
        <taxon>Craniata</taxon>
        <taxon>Vertebrata</taxon>
        <taxon>Euteleostomi</taxon>
        <taxon>Mammalia</taxon>
        <taxon>Eutheria</taxon>
        <taxon>Euarchontoglires</taxon>
        <taxon>Glires</taxon>
        <taxon>Rodentia</taxon>
        <taxon>Myomorpha</taxon>
        <taxon>Muroidea</taxon>
        <taxon>Muridae</taxon>
        <taxon>Murinae</taxon>
        <taxon>Rattus</taxon>
    </lineage>
</organism>
<sequence>MGHAARPGRFFGVYLLYCQNPRHRGRVYVGFTVNPARRVRQHNAGRKKGGAWRTSGRGPWDMVLILHGFPSAVAALRFEWAWQHPQASRRLTHVGPRLRSEASFTFHLRVLAHMLRVPPWVRLPLTVRWLRPDFRHELCPAPPPHMPIAFGPPPPQPLVPKRPAASEADSERRLDLGAKASCTLCARMLQDEEGPLCCPHPGCPLRAHIICLAEEFLQEEPGQLLPLEGHCPSCKKSLLWGNLVGQCHEDTEEEEVDLELEEEHWTDLLET</sequence>
<reference key="1">
    <citation type="journal article" date="2004" name="Genome Res.">
        <title>The status, quality, and expansion of the NIH full-length cDNA project: the Mammalian Gene Collection (MGC).</title>
        <authorList>
            <consortium name="The MGC Project Team"/>
        </authorList>
    </citation>
    <scope>NUCLEOTIDE SEQUENCE [LARGE SCALE MRNA]</scope>
    <source>
        <tissue>Heart</tissue>
    </source>
</reference>
<feature type="chain" id="PRO_0000332122" description="Structure-specific endonuclease subunit SLX1">
    <location>
        <begin position="1"/>
        <end position="271"/>
    </location>
</feature>
<feature type="domain" description="GIY-YIG" evidence="1">
    <location>
        <begin position="9"/>
        <end position="94"/>
    </location>
</feature>
<feature type="zinc finger region" description="SLX1-type" evidence="1">
    <location>
        <begin position="182"/>
        <end position="234"/>
    </location>
</feature>
<keyword id="KW-0227">DNA damage</keyword>
<keyword id="KW-0233">DNA recombination</keyword>
<keyword id="KW-0234">DNA repair</keyword>
<keyword id="KW-0255">Endonuclease</keyword>
<keyword id="KW-0378">Hydrolase</keyword>
<keyword id="KW-0479">Metal-binding</keyword>
<keyword id="KW-0540">Nuclease</keyword>
<keyword id="KW-0539">Nucleus</keyword>
<keyword id="KW-1185">Reference proteome</keyword>
<keyword id="KW-0862">Zinc</keyword>
<keyword id="KW-0863">Zinc-finger</keyword>
<name>SLX1_RAT</name>